<sequence>MKSVVNDTDGIVRVAESVIPEIKHQDEVRVKIASSGLCGSDLPRIFKNGAHYYPITLGHEFSGYIDAVGSGVDDLHPGDAVACVPLLPCFTCPECLKGFYSQCAKYDFIGSRRDGGFAEYIVVKRKNVFALPTDMPIEDGAFIEPITVGLHAFHLAQGCENKNVIIIGAGTIGLLAIQCAVALGAKSVTAIDISSEKLALAKSFGAMQTFNSSEMSAPQMQSVLRELRFNQLILETAGVPQTVELAVEIAGPHAQLALVGTLHQDLHLTSATFGKILRKELTVIGSWMNYSSPWPGQEWETASRLLTERKLSLEPLIAHRGSFESFAQAVRDIARNAMPGKVLLIP</sequence>
<organism>
    <name type="scientific">Escherichia coli O157:H7</name>
    <dbReference type="NCBI Taxonomy" id="83334"/>
    <lineage>
        <taxon>Bacteria</taxon>
        <taxon>Pseudomonadati</taxon>
        <taxon>Pseudomonadota</taxon>
        <taxon>Gammaproteobacteria</taxon>
        <taxon>Enterobacterales</taxon>
        <taxon>Enterobacteriaceae</taxon>
        <taxon>Escherichia</taxon>
    </lineage>
</organism>
<gene>
    <name type="primary">gatD</name>
    <name type="ordered locus">Z3254</name>
    <name type="ordered locus">ECs2894</name>
</gene>
<protein>
    <recommendedName>
        <fullName>Galactitol 1-phosphate 5-dehydrogenase</fullName>
        <ecNumber evidence="2">1.1.1.251</ecNumber>
    </recommendedName>
</protein>
<keyword id="KW-0298">Galactitol metabolism</keyword>
<keyword id="KW-0479">Metal-binding</keyword>
<keyword id="KW-0520">NAD</keyword>
<keyword id="KW-0560">Oxidoreductase</keyword>
<keyword id="KW-1185">Reference proteome</keyword>
<keyword id="KW-0862">Zinc</keyword>
<proteinExistence type="inferred from homology"/>
<feature type="chain" id="PRO_0000160880" description="Galactitol 1-phosphate 5-dehydrogenase">
    <location>
        <begin position="1"/>
        <end position="346"/>
    </location>
</feature>
<feature type="binding site" evidence="1">
    <location>
        <position position="38"/>
    </location>
    <ligand>
        <name>Zn(2+)</name>
        <dbReference type="ChEBI" id="CHEBI:29105"/>
        <label>1</label>
        <note>catalytic</note>
    </ligand>
</feature>
<feature type="binding site" evidence="1">
    <location>
        <position position="59"/>
    </location>
    <ligand>
        <name>Zn(2+)</name>
        <dbReference type="ChEBI" id="CHEBI:29105"/>
        <label>1</label>
        <note>catalytic</note>
    </ligand>
</feature>
<feature type="binding site" evidence="1">
    <location>
        <position position="89"/>
    </location>
    <ligand>
        <name>Zn(2+)</name>
        <dbReference type="ChEBI" id="CHEBI:29105"/>
        <label>2</label>
    </ligand>
</feature>
<feature type="binding site" evidence="1">
    <location>
        <position position="92"/>
    </location>
    <ligand>
        <name>Zn(2+)</name>
        <dbReference type="ChEBI" id="CHEBI:29105"/>
        <label>2</label>
    </ligand>
</feature>
<feature type="binding site" evidence="1">
    <location>
        <position position="95"/>
    </location>
    <ligand>
        <name>Zn(2+)</name>
        <dbReference type="ChEBI" id="CHEBI:29105"/>
        <label>2</label>
    </ligand>
</feature>
<feature type="binding site" evidence="1">
    <location>
        <position position="103"/>
    </location>
    <ligand>
        <name>Zn(2+)</name>
        <dbReference type="ChEBI" id="CHEBI:29105"/>
        <label>2</label>
    </ligand>
</feature>
<feature type="binding site" evidence="1">
    <location>
        <position position="144"/>
    </location>
    <ligand>
        <name>Zn(2+)</name>
        <dbReference type="ChEBI" id="CHEBI:29105"/>
        <label>1</label>
        <note>catalytic</note>
    </ligand>
</feature>
<accession>P0A9S4</accession>
<accession>P37190</accession>
<accession>P76410</accession>
<name>GATD_ECO57</name>
<comment type="function">
    <text evidence="2">Converts galactitol 1-phosphate to tagatose 6-phosphate.</text>
</comment>
<comment type="catalytic activity">
    <reaction evidence="2">
        <text>galactitol 1-phosphate + NAD(+) = keto-D-tagatose 6-phosphate + NADH + H(+)</text>
        <dbReference type="Rhea" id="RHEA:28106"/>
        <dbReference type="ChEBI" id="CHEBI:15378"/>
        <dbReference type="ChEBI" id="CHEBI:57540"/>
        <dbReference type="ChEBI" id="CHEBI:57945"/>
        <dbReference type="ChEBI" id="CHEBI:60083"/>
        <dbReference type="ChEBI" id="CHEBI:134283"/>
        <dbReference type="EC" id="1.1.1.251"/>
    </reaction>
</comment>
<comment type="cofactor">
    <cofactor evidence="1">
        <name>Zn(2+)</name>
        <dbReference type="ChEBI" id="CHEBI:29105"/>
    </cofactor>
    <text evidence="1">Binds 2 Zn(2+) ions per subunit.</text>
</comment>
<comment type="similarity">
    <text evidence="3">Belongs to the zinc-containing alcohol dehydrogenase family.</text>
</comment>
<dbReference type="EC" id="1.1.1.251" evidence="2"/>
<dbReference type="EMBL" id="AE005174">
    <property type="protein sequence ID" value="AAG57148.1"/>
    <property type="molecule type" value="Genomic_DNA"/>
</dbReference>
<dbReference type="EMBL" id="BA000007">
    <property type="protein sequence ID" value="BAB36317.1"/>
    <property type="molecule type" value="Genomic_DNA"/>
</dbReference>
<dbReference type="PIR" id="F90990">
    <property type="entry name" value="F90990"/>
</dbReference>
<dbReference type="PIR" id="H85835">
    <property type="entry name" value="H85835"/>
</dbReference>
<dbReference type="RefSeq" id="NP_310921.1">
    <property type="nucleotide sequence ID" value="NC_002695.1"/>
</dbReference>
<dbReference type="RefSeq" id="WP_000844219.1">
    <property type="nucleotide sequence ID" value="NZ_VOAI01000013.1"/>
</dbReference>
<dbReference type="SMR" id="P0A9S4"/>
<dbReference type="STRING" id="155864.Z3254"/>
<dbReference type="GeneID" id="916596"/>
<dbReference type="KEGG" id="ece:Z3254"/>
<dbReference type="KEGG" id="ecs:ECs_2894"/>
<dbReference type="PATRIC" id="fig|386585.9.peg.3026"/>
<dbReference type="eggNOG" id="COG1063">
    <property type="taxonomic scope" value="Bacteria"/>
</dbReference>
<dbReference type="HOGENOM" id="CLU_026673_11_0_6"/>
<dbReference type="OMA" id="LLPCFQC"/>
<dbReference type="Proteomes" id="UP000000558">
    <property type="component" value="Chromosome"/>
</dbReference>
<dbReference type="Proteomes" id="UP000002519">
    <property type="component" value="Chromosome"/>
</dbReference>
<dbReference type="GO" id="GO:0008868">
    <property type="term" value="F:galactitol-1-phosphate 5-dehydrogenase activity"/>
    <property type="evidence" value="ECO:0007669"/>
    <property type="project" value="UniProtKB-EC"/>
</dbReference>
<dbReference type="GO" id="GO:0008270">
    <property type="term" value="F:zinc ion binding"/>
    <property type="evidence" value="ECO:0007669"/>
    <property type="project" value="InterPro"/>
</dbReference>
<dbReference type="GO" id="GO:0019402">
    <property type="term" value="P:galactitol metabolic process"/>
    <property type="evidence" value="ECO:0007669"/>
    <property type="project" value="UniProtKB-KW"/>
</dbReference>
<dbReference type="CDD" id="cd08236">
    <property type="entry name" value="sugar_DH"/>
    <property type="match status" value="1"/>
</dbReference>
<dbReference type="FunFam" id="3.40.50.720:FF:000332">
    <property type="entry name" value="Galactitol-1-phosphate 5-dehydrogenase"/>
    <property type="match status" value="1"/>
</dbReference>
<dbReference type="Gene3D" id="3.90.180.10">
    <property type="entry name" value="Medium-chain alcohol dehydrogenases, catalytic domain"/>
    <property type="match status" value="1"/>
</dbReference>
<dbReference type="Gene3D" id="3.40.50.720">
    <property type="entry name" value="NAD(P)-binding Rossmann-like Domain"/>
    <property type="match status" value="1"/>
</dbReference>
<dbReference type="InterPro" id="IPR013149">
    <property type="entry name" value="ADH-like_C"/>
</dbReference>
<dbReference type="InterPro" id="IPR013154">
    <property type="entry name" value="ADH-like_N"/>
</dbReference>
<dbReference type="InterPro" id="IPR002328">
    <property type="entry name" value="ADH_Zn_CS"/>
</dbReference>
<dbReference type="InterPro" id="IPR011032">
    <property type="entry name" value="GroES-like_sf"/>
</dbReference>
<dbReference type="InterPro" id="IPR036291">
    <property type="entry name" value="NAD(P)-bd_dom_sf"/>
</dbReference>
<dbReference type="InterPro" id="IPR020843">
    <property type="entry name" value="PKS_ER"/>
</dbReference>
<dbReference type="InterPro" id="IPR050129">
    <property type="entry name" value="Zn_alcohol_dh"/>
</dbReference>
<dbReference type="NCBIfam" id="NF007642">
    <property type="entry name" value="PRK10309.1"/>
    <property type="match status" value="1"/>
</dbReference>
<dbReference type="PANTHER" id="PTHR43401">
    <property type="entry name" value="L-THREONINE 3-DEHYDROGENASE"/>
    <property type="match status" value="1"/>
</dbReference>
<dbReference type="PANTHER" id="PTHR43401:SF2">
    <property type="entry name" value="L-THREONINE 3-DEHYDROGENASE"/>
    <property type="match status" value="1"/>
</dbReference>
<dbReference type="Pfam" id="PF08240">
    <property type="entry name" value="ADH_N"/>
    <property type="match status" value="1"/>
</dbReference>
<dbReference type="Pfam" id="PF00107">
    <property type="entry name" value="ADH_zinc_N"/>
    <property type="match status" value="1"/>
</dbReference>
<dbReference type="SMART" id="SM00829">
    <property type="entry name" value="PKS_ER"/>
    <property type="match status" value="1"/>
</dbReference>
<dbReference type="SUPFAM" id="SSF50129">
    <property type="entry name" value="GroES-like"/>
    <property type="match status" value="1"/>
</dbReference>
<dbReference type="SUPFAM" id="SSF51735">
    <property type="entry name" value="NAD(P)-binding Rossmann-fold domains"/>
    <property type="match status" value="1"/>
</dbReference>
<dbReference type="PROSITE" id="PS00059">
    <property type="entry name" value="ADH_ZINC"/>
    <property type="match status" value="1"/>
</dbReference>
<reference key="1">
    <citation type="journal article" date="2001" name="Nature">
        <title>Genome sequence of enterohaemorrhagic Escherichia coli O157:H7.</title>
        <authorList>
            <person name="Perna N.T."/>
            <person name="Plunkett G. III"/>
            <person name="Burland V."/>
            <person name="Mau B."/>
            <person name="Glasner J.D."/>
            <person name="Rose D.J."/>
            <person name="Mayhew G.F."/>
            <person name="Evans P.S."/>
            <person name="Gregor J."/>
            <person name="Kirkpatrick H.A."/>
            <person name="Posfai G."/>
            <person name="Hackett J."/>
            <person name="Klink S."/>
            <person name="Boutin A."/>
            <person name="Shao Y."/>
            <person name="Miller L."/>
            <person name="Grotbeck E.J."/>
            <person name="Davis N.W."/>
            <person name="Lim A."/>
            <person name="Dimalanta E.T."/>
            <person name="Potamousis K."/>
            <person name="Apodaca J."/>
            <person name="Anantharaman T.S."/>
            <person name="Lin J."/>
            <person name="Yen G."/>
            <person name="Schwartz D.C."/>
            <person name="Welch R.A."/>
            <person name="Blattner F.R."/>
        </authorList>
    </citation>
    <scope>NUCLEOTIDE SEQUENCE [LARGE SCALE GENOMIC DNA]</scope>
    <source>
        <strain>O157:H7 / EDL933 / ATCC 700927 / EHEC</strain>
    </source>
</reference>
<reference key="2">
    <citation type="journal article" date="2001" name="DNA Res.">
        <title>Complete genome sequence of enterohemorrhagic Escherichia coli O157:H7 and genomic comparison with a laboratory strain K-12.</title>
        <authorList>
            <person name="Hayashi T."/>
            <person name="Makino K."/>
            <person name="Ohnishi M."/>
            <person name="Kurokawa K."/>
            <person name="Ishii K."/>
            <person name="Yokoyama K."/>
            <person name="Han C.-G."/>
            <person name="Ohtsubo E."/>
            <person name="Nakayama K."/>
            <person name="Murata T."/>
            <person name="Tanaka M."/>
            <person name="Tobe T."/>
            <person name="Iida T."/>
            <person name="Takami H."/>
            <person name="Honda T."/>
            <person name="Sasakawa C."/>
            <person name="Ogasawara N."/>
            <person name="Yasunaga T."/>
            <person name="Kuhara S."/>
            <person name="Shiba T."/>
            <person name="Hattori M."/>
            <person name="Shinagawa H."/>
        </authorList>
    </citation>
    <scope>NUCLEOTIDE SEQUENCE [LARGE SCALE GENOMIC DNA]</scope>
    <source>
        <strain>O157:H7 / Sakai / RIMD 0509952 / EHEC</strain>
    </source>
</reference>
<evidence type="ECO:0000250" key="1"/>
<evidence type="ECO:0000250" key="2">
    <source>
        <dbReference type="UniProtKB" id="P0A9S3"/>
    </source>
</evidence>
<evidence type="ECO:0000305" key="3"/>